<accession>Q9VSF3</accession>
<organism>
    <name type="scientific">Drosophila melanogaster</name>
    <name type="common">Fruit fly</name>
    <dbReference type="NCBI Taxonomy" id="7227"/>
    <lineage>
        <taxon>Eukaryota</taxon>
        <taxon>Metazoa</taxon>
        <taxon>Ecdysozoa</taxon>
        <taxon>Arthropoda</taxon>
        <taxon>Hexapoda</taxon>
        <taxon>Insecta</taxon>
        <taxon>Pterygota</taxon>
        <taxon>Neoptera</taxon>
        <taxon>Endopterygota</taxon>
        <taxon>Diptera</taxon>
        <taxon>Brachycera</taxon>
        <taxon>Muscomorpha</taxon>
        <taxon>Ephydroidea</taxon>
        <taxon>Drosophilidae</taxon>
        <taxon>Drosophila</taxon>
        <taxon>Sophophora</taxon>
    </lineage>
</organism>
<proteinExistence type="evidence at protein level"/>
<evidence type="ECO:0000250" key="1"/>
<evidence type="ECO:0000255" key="2">
    <source>
        <dbReference type="PROSITE-ProRule" id="PRU00388"/>
    </source>
</evidence>
<evidence type="ECO:0000255" key="3">
    <source>
        <dbReference type="PROSITE-ProRule" id="PRU10133"/>
    </source>
</evidence>
<evidence type="ECO:0000269" key="4">
    <source>
    </source>
</evidence>
<evidence type="ECO:0000303" key="5">
    <source>
    </source>
</evidence>
<evidence type="ECO:0000312" key="6">
    <source>
        <dbReference type="FlyBase" id="FBgn0035853"/>
    </source>
</evidence>
<keyword id="KW-0067">ATP-binding</keyword>
<keyword id="KW-0547">Nucleotide-binding</keyword>
<keyword id="KW-1185">Reference proteome</keyword>
<keyword id="KW-0808">Transferase</keyword>
<keyword id="KW-0833">Ubl conjugation pathway</keyword>
<feature type="chain" id="PRO_0000082492" description="Nedd8-conjugating enzyme UbcE2M">
    <location>
        <begin position="1"/>
        <end position="181"/>
    </location>
</feature>
<feature type="domain" description="UBC core" evidence="2">
    <location>
        <begin position="26"/>
        <end position="170"/>
    </location>
</feature>
<feature type="region of interest" description="Interaction with Uba3" evidence="1">
    <location>
        <begin position="4"/>
        <end position="7"/>
    </location>
</feature>
<feature type="region of interest" description="Interaction with Uba3" evidence="1">
    <location>
        <begin position="24"/>
        <end position="54"/>
    </location>
</feature>
<feature type="active site" description="Glycyl thioester intermediate" evidence="2 3">
    <location>
        <position position="108"/>
    </location>
</feature>
<feature type="mutagenesis site" description="Abolishes neddylation E2 activity." evidence="4">
    <location>
        <begin position="2"/>
        <end position="23"/>
    </location>
</feature>
<reference key="1">
    <citation type="journal article" date="2000" name="Science">
        <title>The genome sequence of Drosophila melanogaster.</title>
        <authorList>
            <person name="Adams M.D."/>
            <person name="Celniker S.E."/>
            <person name="Holt R.A."/>
            <person name="Evans C.A."/>
            <person name="Gocayne J.D."/>
            <person name="Amanatides P.G."/>
            <person name="Scherer S.E."/>
            <person name="Li P.W."/>
            <person name="Hoskins R.A."/>
            <person name="Galle R.F."/>
            <person name="George R.A."/>
            <person name="Lewis S.E."/>
            <person name="Richards S."/>
            <person name="Ashburner M."/>
            <person name="Henderson S.N."/>
            <person name="Sutton G.G."/>
            <person name="Wortman J.R."/>
            <person name="Yandell M.D."/>
            <person name="Zhang Q."/>
            <person name="Chen L.X."/>
            <person name="Brandon R.C."/>
            <person name="Rogers Y.-H.C."/>
            <person name="Blazej R.G."/>
            <person name="Champe M."/>
            <person name="Pfeiffer B.D."/>
            <person name="Wan K.H."/>
            <person name="Doyle C."/>
            <person name="Baxter E.G."/>
            <person name="Helt G."/>
            <person name="Nelson C.R."/>
            <person name="Miklos G.L.G."/>
            <person name="Abril J.F."/>
            <person name="Agbayani A."/>
            <person name="An H.-J."/>
            <person name="Andrews-Pfannkoch C."/>
            <person name="Baldwin D."/>
            <person name="Ballew R.M."/>
            <person name="Basu A."/>
            <person name="Baxendale J."/>
            <person name="Bayraktaroglu L."/>
            <person name="Beasley E.M."/>
            <person name="Beeson K.Y."/>
            <person name="Benos P.V."/>
            <person name="Berman B.P."/>
            <person name="Bhandari D."/>
            <person name="Bolshakov S."/>
            <person name="Borkova D."/>
            <person name="Botchan M.R."/>
            <person name="Bouck J."/>
            <person name="Brokstein P."/>
            <person name="Brottier P."/>
            <person name="Burtis K.C."/>
            <person name="Busam D.A."/>
            <person name="Butler H."/>
            <person name="Cadieu E."/>
            <person name="Center A."/>
            <person name="Chandra I."/>
            <person name="Cherry J.M."/>
            <person name="Cawley S."/>
            <person name="Dahlke C."/>
            <person name="Davenport L.B."/>
            <person name="Davies P."/>
            <person name="de Pablos B."/>
            <person name="Delcher A."/>
            <person name="Deng Z."/>
            <person name="Mays A.D."/>
            <person name="Dew I."/>
            <person name="Dietz S.M."/>
            <person name="Dodson K."/>
            <person name="Doup L.E."/>
            <person name="Downes M."/>
            <person name="Dugan-Rocha S."/>
            <person name="Dunkov B.C."/>
            <person name="Dunn P."/>
            <person name="Durbin K.J."/>
            <person name="Evangelista C.C."/>
            <person name="Ferraz C."/>
            <person name="Ferriera S."/>
            <person name="Fleischmann W."/>
            <person name="Fosler C."/>
            <person name="Gabrielian A.E."/>
            <person name="Garg N.S."/>
            <person name="Gelbart W.M."/>
            <person name="Glasser K."/>
            <person name="Glodek A."/>
            <person name="Gong F."/>
            <person name="Gorrell J.H."/>
            <person name="Gu Z."/>
            <person name="Guan P."/>
            <person name="Harris M."/>
            <person name="Harris N.L."/>
            <person name="Harvey D.A."/>
            <person name="Heiman T.J."/>
            <person name="Hernandez J.R."/>
            <person name="Houck J."/>
            <person name="Hostin D."/>
            <person name="Houston K.A."/>
            <person name="Howland T.J."/>
            <person name="Wei M.-H."/>
            <person name="Ibegwam C."/>
            <person name="Jalali M."/>
            <person name="Kalush F."/>
            <person name="Karpen G.H."/>
            <person name="Ke Z."/>
            <person name="Kennison J.A."/>
            <person name="Ketchum K.A."/>
            <person name="Kimmel B.E."/>
            <person name="Kodira C.D."/>
            <person name="Kraft C.L."/>
            <person name="Kravitz S."/>
            <person name="Kulp D."/>
            <person name="Lai Z."/>
            <person name="Lasko P."/>
            <person name="Lei Y."/>
            <person name="Levitsky A.A."/>
            <person name="Li J.H."/>
            <person name="Li Z."/>
            <person name="Liang Y."/>
            <person name="Lin X."/>
            <person name="Liu X."/>
            <person name="Mattei B."/>
            <person name="McIntosh T.C."/>
            <person name="McLeod M.P."/>
            <person name="McPherson D."/>
            <person name="Merkulov G."/>
            <person name="Milshina N.V."/>
            <person name="Mobarry C."/>
            <person name="Morris J."/>
            <person name="Moshrefi A."/>
            <person name="Mount S.M."/>
            <person name="Moy M."/>
            <person name="Murphy B."/>
            <person name="Murphy L."/>
            <person name="Muzny D.M."/>
            <person name="Nelson D.L."/>
            <person name="Nelson D.R."/>
            <person name="Nelson K.A."/>
            <person name="Nixon K."/>
            <person name="Nusskern D.R."/>
            <person name="Pacleb J.M."/>
            <person name="Palazzolo M."/>
            <person name="Pittman G.S."/>
            <person name="Pan S."/>
            <person name="Pollard J."/>
            <person name="Puri V."/>
            <person name="Reese M.G."/>
            <person name="Reinert K."/>
            <person name="Remington K."/>
            <person name="Saunders R.D.C."/>
            <person name="Scheeler F."/>
            <person name="Shen H."/>
            <person name="Shue B.C."/>
            <person name="Siden-Kiamos I."/>
            <person name="Simpson M."/>
            <person name="Skupski M.P."/>
            <person name="Smith T.J."/>
            <person name="Spier E."/>
            <person name="Spradling A.C."/>
            <person name="Stapleton M."/>
            <person name="Strong R."/>
            <person name="Sun E."/>
            <person name="Svirskas R."/>
            <person name="Tector C."/>
            <person name="Turner R."/>
            <person name="Venter E."/>
            <person name="Wang A.H."/>
            <person name="Wang X."/>
            <person name="Wang Z.-Y."/>
            <person name="Wassarman D.A."/>
            <person name="Weinstock G.M."/>
            <person name="Weissenbach J."/>
            <person name="Williams S.M."/>
            <person name="Woodage T."/>
            <person name="Worley K.C."/>
            <person name="Wu D."/>
            <person name="Yang S."/>
            <person name="Yao Q.A."/>
            <person name="Ye J."/>
            <person name="Yeh R.-F."/>
            <person name="Zaveri J.S."/>
            <person name="Zhan M."/>
            <person name="Zhang G."/>
            <person name="Zhao Q."/>
            <person name="Zheng L."/>
            <person name="Zheng X.H."/>
            <person name="Zhong F.N."/>
            <person name="Zhong W."/>
            <person name="Zhou X."/>
            <person name="Zhu S.C."/>
            <person name="Zhu X."/>
            <person name="Smith H.O."/>
            <person name="Gibbs R.A."/>
            <person name="Myers E.W."/>
            <person name="Rubin G.M."/>
            <person name="Venter J.C."/>
        </authorList>
    </citation>
    <scope>NUCLEOTIDE SEQUENCE [LARGE SCALE GENOMIC DNA]</scope>
    <source>
        <strain>Berkeley</strain>
    </source>
</reference>
<reference key="2">
    <citation type="journal article" date="2002" name="Genome Biol.">
        <title>Annotation of the Drosophila melanogaster euchromatic genome: a systematic review.</title>
        <authorList>
            <person name="Misra S."/>
            <person name="Crosby M.A."/>
            <person name="Mungall C.J."/>
            <person name="Matthews B.B."/>
            <person name="Campbell K.S."/>
            <person name="Hradecky P."/>
            <person name="Huang Y."/>
            <person name="Kaminker J.S."/>
            <person name="Millburn G.H."/>
            <person name="Prochnik S.E."/>
            <person name="Smith C.D."/>
            <person name="Tupy J.L."/>
            <person name="Whitfield E.J."/>
            <person name="Bayraktaroglu L."/>
            <person name="Berman B.P."/>
            <person name="Bettencourt B.R."/>
            <person name="Celniker S.E."/>
            <person name="de Grey A.D.N.J."/>
            <person name="Drysdale R.A."/>
            <person name="Harris N.L."/>
            <person name="Richter J."/>
            <person name="Russo S."/>
            <person name="Schroeder A.J."/>
            <person name="Shu S.Q."/>
            <person name="Stapleton M."/>
            <person name="Yamada C."/>
            <person name="Ashburner M."/>
            <person name="Gelbart W.M."/>
            <person name="Rubin G.M."/>
            <person name="Lewis S.E."/>
        </authorList>
    </citation>
    <scope>GENOME REANNOTATION</scope>
    <source>
        <strain>Berkeley</strain>
    </source>
</reference>
<reference key="3">
    <citation type="journal article" date="2002" name="Genome Biol.">
        <title>A Drosophila full-length cDNA resource.</title>
        <authorList>
            <person name="Stapleton M."/>
            <person name="Carlson J.W."/>
            <person name="Brokstein P."/>
            <person name="Yu C."/>
            <person name="Champe M."/>
            <person name="George R.A."/>
            <person name="Guarin H."/>
            <person name="Kronmiller B."/>
            <person name="Pacleb J.M."/>
            <person name="Park S."/>
            <person name="Wan K.H."/>
            <person name="Rubin G.M."/>
            <person name="Celniker S.E."/>
        </authorList>
    </citation>
    <scope>NUCLEOTIDE SEQUENCE [LARGE SCALE MRNA]</scope>
    <source>
        <strain>Berkeley</strain>
        <tissue>Embryo</tissue>
    </source>
</reference>
<reference key="4">
    <citation type="journal article" date="2011" name="PLoS ONE">
        <title>In vivo RNAi screen reveals neddylation genes as novel regulators of Hedgehog signaling.</title>
        <authorList>
            <person name="Du J."/>
            <person name="Zhang J."/>
            <person name="Su Y."/>
            <person name="Liu M."/>
            <person name="Ospina J.K."/>
            <person name="Yang S."/>
            <person name="Zhu A.J."/>
        </authorList>
    </citation>
    <scope>FUNCTION</scope>
    <scope>TISSUE SPECIFICITY</scope>
    <scope>MUTAGENESIS OF 2-ILE--LYS-23</scope>
</reference>
<gene>
    <name evidence="6" type="primary">UbcE2M</name>
    <name evidence="5" type="synonym">Ubc12</name>
    <name evidence="6" type="ORF">CG7375</name>
</gene>
<name>UBC2M_DROME</name>
<sequence length="181" mass="20738">MIKLFTLKQQKKDGEQKGSQQKKASAAQLRIQKDINELNLPNTCATDFPDPNDLLNFKLIISPDEGFYRDGRFVFNFRVGSNYPHEPPKVKCATQVYHPNIDLDGNVCLNILREDWNPVLNINSIVYGLQFLFLEPNPEDPLNKEAADVLQTNRRQFENNVKKAMRGGCVGETYFECCLLK</sequence>
<comment type="function">
    <text evidence="4">Accepts the ubiquitin-like protein Nedd8 from the Uba3-APP-BP1 E1 complex and catalyzes its covalent attachment to other proteins. Required for Cul1 and Cul3 neddylation. Negatively regulates full-length ci stability and hedgehog signaling.</text>
</comment>
<comment type="catalytic activity">
    <reaction>
        <text>[E1 NEDD8-activating enzyme]-S-[NEDD8 protein]-yl-L-cysteine + [E2 NEDD8-conjugating enzyme]-L-cysteine = [E1 NEDD8-activating enzyme]-L-cysteine + [E2 NEDD8-conjugating enzyme]-S-[NEDD8-protein]-yl-L-cysteine.</text>
        <dbReference type="EC" id="2.3.2.34"/>
    </reaction>
</comment>
<comment type="pathway">
    <text>Protein modification; protein neddylation.</text>
</comment>
<comment type="subunit">
    <text evidence="1">Interacts with Uba3.</text>
</comment>
<comment type="tissue specificity">
    <text evidence="4">Expressed in the wing disk.</text>
</comment>
<comment type="domain">
    <text evidence="1">Both the N-terminal docking peptide and the catalytic core domain must bind the Uba3-Ula1 complex simultaneously for optimal transfer of Nedd8.</text>
</comment>
<comment type="similarity">
    <text evidence="2">Belongs to the ubiquitin-conjugating enzyme family. UBC12 subfamily.</text>
</comment>
<protein>
    <recommendedName>
        <fullName evidence="6">Nedd8-conjugating enzyme UbcE2M</fullName>
        <ecNumber>2.3.2.34</ecNumber>
    </recommendedName>
    <alternativeName>
        <fullName>Nedd8 carrier protein</fullName>
    </alternativeName>
</protein>
<dbReference type="EC" id="2.3.2.34"/>
<dbReference type="EMBL" id="AE014296">
    <property type="protein sequence ID" value="AAF50468.1"/>
    <property type="molecule type" value="Genomic_DNA"/>
</dbReference>
<dbReference type="EMBL" id="AY118545">
    <property type="protein sequence ID" value="AAM49914.1"/>
    <property type="molecule type" value="mRNA"/>
</dbReference>
<dbReference type="RefSeq" id="NP_001261567.1">
    <property type="nucleotide sequence ID" value="NM_001274638.1"/>
</dbReference>
<dbReference type="RefSeq" id="NP_001261568.1">
    <property type="nucleotide sequence ID" value="NM_001274639.1"/>
</dbReference>
<dbReference type="RefSeq" id="NP_648187.1">
    <property type="nucleotide sequence ID" value="NM_139930.2"/>
</dbReference>
<dbReference type="SMR" id="Q9VSF3"/>
<dbReference type="BioGRID" id="64336">
    <property type="interactions" value="20"/>
</dbReference>
<dbReference type="FunCoup" id="Q9VSF3">
    <property type="interactions" value="2418"/>
</dbReference>
<dbReference type="IntAct" id="Q9VSF3">
    <property type="interactions" value="8"/>
</dbReference>
<dbReference type="STRING" id="7227.FBpp0304449"/>
<dbReference type="PaxDb" id="7227-FBpp0304449"/>
<dbReference type="DNASU" id="38916"/>
<dbReference type="EnsemblMetazoa" id="FBtr0076722">
    <property type="protein sequence ID" value="FBpp0076445"/>
    <property type="gene ID" value="FBgn0035853"/>
</dbReference>
<dbReference type="EnsemblMetazoa" id="FBtr0332138">
    <property type="protein sequence ID" value="FBpp0304448"/>
    <property type="gene ID" value="FBgn0035853"/>
</dbReference>
<dbReference type="EnsemblMetazoa" id="FBtr0332139">
    <property type="protein sequence ID" value="FBpp0304449"/>
    <property type="gene ID" value="FBgn0035853"/>
</dbReference>
<dbReference type="GeneID" id="38916"/>
<dbReference type="KEGG" id="dme:Dmel_CG7375"/>
<dbReference type="UCSC" id="CG7375-RA">
    <property type="organism name" value="d. melanogaster"/>
</dbReference>
<dbReference type="AGR" id="FB:FBgn0035853"/>
<dbReference type="CTD" id="38916"/>
<dbReference type="FlyBase" id="FBgn0035853">
    <property type="gene designation" value="UbcE2M"/>
</dbReference>
<dbReference type="VEuPathDB" id="VectorBase:FBgn0035853"/>
<dbReference type="eggNOG" id="KOG0420">
    <property type="taxonomic scope" value="Eukaryota"/>
</dbReference>
<dbReference type="GeneTree" id="ENSGT00940000163935"/>
<dbReference type="HOGENOM" id="CLU_030988_6_0_1"/>
<dbReference type="InParanoid" id="Q9VSF3"/>
<dbReference type="OMA" id="CQVDFPD"/>
<dbReference type="OrthoDB" id="10249039at2759"/>
<dbReference type="PhylomeDB" id="Q9VSF3"/>
<dbReference type="Reactome" id="R-DME-2173789">
    <property type="pathway name" value="TGF-beta receptor signaling activates SMADs"/>
</dbReference>
<dbReference type="Reactome" id="R-DME-8951664">
    <property type="pathway name" value="Neddylation"/>
</dbReference>
<dbReference type="Reactome" id="R-DME-983168">
    <property type="pathway name" value="Antigen processing: Ubiquitination &amp; Proteasome degradation"/>
</dbReference>
<dbReference type="SignaLink" id="Q9VSF3"/>
<dbReference type="UniPathway" id="UPA00885"/>
<dbReference type="BioGRID-ORCS" id="38916">
    <property type="hits" value="1 hit in 1 CRISPR screen"/>
</dbReference>
<dbReference type="GenomeRNAi" id="38916"/>
<dbReference type="PRO" id="PR:Q9VSF3"/>
<dbReference type="Proteomes" id="UP000000803">
    <property type="component" value="Chromosome 3L"/>
</dbReference>
<dbReference type="Bgee" id="FBgn0035853">
    <property type="expression patterns" value="Expressed in saliva-secreting gland and 158 other cell types or tissues"/>
</dbReference>
<dbReference type="ExpressionAtlas" id="Q9VSF3">
    <property type="expression patterns" value="baseline and differential"/>
</dbReference>
<dbReference type="GO" id="GO:0005829">
    <property type="term" value="C:cytosol"/>
    <property type="evidence" value="ECO:0000318"/>
    <property type="project" value="GO_Central"/>
</dbReference>
<dbReference type="GO" id="GO:0005634">
    <property type="term" value="C:nucleus"/>
    <property type="evidence" value="ECO:0000318"/>
    <property type="project" value="GO_Central"/>
</dbReference>
<dbReference type="GO" id="GO:0005524">
    <property type="term" value="F:ATP binding"/>
    <property type="evidence" value="ECO:0007669"/>
    <property type="project" value="UniProtKB-KW"/>
</dbReference>
<dbReference type="GO" id="GO:0061654">
    <property type="term" value="F:NEDD8 conjugating enzyme activity"/>
    <property type="evidence" value="ECO:0000314"/>
    <property type="project" value="FlyBase"/>
</dbReference>
<dbReference type="GO" id="GO:0019788">
    <property type="term" value="F:NEDD8 transferase activity"/>
    <property type="evidence" value="ECO:0000250"/>
    <property type="project" value="UniProtKB"/>
</dbReference>
<dbReference type="GO" id="GO:0045879">
    <property type="term" value="P:negative regulation of smoothened signaling pathway"/>
    <property type="evidence" value="ECO:0000315"/>
    <property type="project" value="FlyBase"/>
</dbReference>
<dbReference type="GO" id="GO:0061059">
    <property type="term" value="P:positive regulation of peptidoglycan recognition protein signaling pathway"/>
    <property type="evidence" value="ECO:0000315"/>
    <property type="project" value="FlyBase"/>
</dbReference>
<dbReference type="GO" id="GO:0036211">
    <property type="term" value="P:protein modification process"/>
    <property type="evidence" value="ECO:0000250"/>
    <property type="project" value="UniProtKB"/>
</dbReference>
<dbReference type="GO" id="GO:0045116">
    <property type="term" value="P:protein neddylation"/>
    <property type="evidence" value="ECO:0000314"/>
    <property type="project" value="FlyBase"/>
</dbReference>
<dbReference type="CDD" id="cd23794">
    <property type="entry name" value="UBCc_UBE2F_UBE2M"/>
    <property type="match status" value="1"/>
</dbReference>
<dbReference type="FunFam" id="3.10.110.10:FF:000239">
    <property type="entry name" value="NEDD8-conjugating enzyme Ubc12"/>
    <property type="match status" value="1"/>
</dbReference>
<dbReference type="Gene3D" id="3.10.110.10">
    <property type="entry name" value="Ubiquitin Conjugating Enzyme"/>
    <property type="match status" value="1"/>
</dbReference>
<dbReference type="InterPro" id="IPR050113">
    <property type="entry name" value="Ub_conjugating_enzyme"/>
</dbReference>
<dbReference type="InterPro" id="IPR000608">
    <property type="entry name" value="UBQ-conjugat_E2_core"/>
</dbReference>
<dbReference type="InterPro" id="IPR023313">
    <property type="entry name" value="UBQ-conjugating_AS"/>
</dbReference>
<dbReference type="InterPro" id="IPR016135">
    <property type="entry name" value="UBQ-conjugating_enzyme/RWD"/>
</dbReference>
<dbReference type="PANTHER" id="PTHR24067">
    <property type="entry name" value="UBIQUITIN-CONJUGATING ENZYME E2"/>
    <property type="match status" value="1"/>
</dbReference>
<dbReference type="Pfam" id="PF00179">
    <property type="entry name" value="UQ_con"/>
    <property type="match status" value="1"/>
</dbReference>
<dbReference type="SMART" id="SM00212">
    <property type="entry name" value="UBCc"/>
    <property type="match status" value="1"/>
</dbReference>
<dbReference type="SUPFAM" id="SSF54495">
    <property type="entry name" value="UBC-like"/>
    <property type="match status" value="1"/>
</dbReference>
<dbReference type="PROSITE" id="PS00183">
    <property type="entry name" value="UBC_1"/>
    <property type="match status" value="1"/>
</dbReference>
<dbReference type="PROSITE" id="PS50127">
    <property type="entry name" value="UBC_2"/>
    <property type="match status" value="1"/>
</dbReference>